<reference key="1">
    <citation type="journal article" date="2002" name="Proc. Natl. Acad. Sci. U.S.A.">
        <title>The complete genome of hyperthermophile Methanopyrus kandleri AV19 and monophyly of archaeal methanogens.</title>
        <authorList>
            <person name="Slesarev A.I."/>
            <person name="Mezhevaya K.V."/>
            <person name="Makarova K.S."/>
            <person name="Polushin N.N."/>
            <person name="Shcherbinina O.V."/>
            <person name="Shakhova V.V."/>
            <person name="Belova G.I."/>
            <person name="Aravind L."/>
            <person name="Natale D.A."/>
            <person name="Rogozin I.B."/>
            <person name="Tatusov R.L."/>
            <person name="Wolf Y.I."/>
            <person name="Stetter K.O."/>
            <person name="Malykh A.G."/>
            <person name="Koonin E.V."/>
            <person name="Kozyavkin S.A."/>
        </authorList>
    </citation>
    <scope>NUCLEOTIDE SEQUENCE [LARGE SCALE GENOMIC DNA]</scope>
    <source>
        <strain>AV19 / DSM 6324 / JCM 9639 / NBRC 100938</strain>
    </source>
</reference>
<sequence>MRPAAITTSQRPARRTRSLCRDLECALPDATYVLRGTKNLRDTVLEALESGAEVLFYVTEAKGNPARLHVIDLGEIPPRLRLSFWLGGVKLQRELFGNRVDLSGDLVITTSKRPVSGHMKVAESLSEVLGVEFVPRAGSLEDVLEEALADVLLVVEGHPRHLGTLTFYRRTEKVGPSLFYRDFRTKDERMKL</sequence>
<organism>
    <name type="scientific">Methanopyrus kandleri (strain AV19 / DSM 6324 / JCM 9639 / NBRC 100938)</name>
    <dbReference type="NCBI Taxonomy" id="190192"/>
    <lineage>
        <taxon>Archaea</taxon>
        <taxon>Methanobacteriati</taxon>
        <taxon>Methanobacteriota</taxon>
        <taxon>Methanomada group</taxon>
        <taxon>Methanopyri</taxon>
        <taxon>Methanopyrales</taxon>
        <taxon>Methanopyraceae</taxon>
        <taxon>Methanopyrus</taxon>
    </lineage>
</organism>
<keyword id="KW-1185">Reference proteome</keyword>
<keyword id="KW-0690">Ribosome biogenesis</keyword>
<feature type="chain" id="PRO_0000120271" description="Probable Brix domain-containing ribosomal biogenesis protein">
    <location>
        <begin position="1"/>
        <end position="192"/>
    </location>
</feature>
<feature type="domain" description="Brix" evidence="1">
    <location>
        <begin position="2"/>
        <end position="191"/>
    </location>
</feature>
<proteinExistence type="inferred from homology"/>
<protein>
    <recommendedName>
        <fullName evidence="1">Probable Brix domain-containing ribosomal biogenesis protein</fullName>
    </recommendedName>
</protein>
<comment type="function">
    <text evidence="1">Probably involved in the biogenesis of the ribosome.</text>
</comment>
<evidence type="ECO:0000255" key="1">
    <source>
        <dbReference type="HAMAP-Rule" id="MF_00699"/>
    </source>
</evidence>
<dbReference type="EMBL" id="AE009439">
    <property type="protein sequence ID" value="AAM01592.1"/>
    <property type="molecule type" value="Genomic_DNA"/>
</dbReference>
<dbReference type="RefSeq" id="WP_011018747.1">
    <property type="nucleotide sequence ID" value="NC_003551.1"/>
</dbReference>
<dbReference type="SMR" id="Q8TYC5"/>
<dbReference type="STRING" id="190192.MK0377"/>
<dbReference type="PaxDb" id="190192-MK0377"/>
<dbReference type="EnsemblBacteria" id="AAM01592">
    <property type="protein sequence ID" value="AAM01592"/>
    <property type="gene ID" value="MK0377"/>
</dbReference>
<dbReference type="GeneID" id="1477680"/>
<dbReference type="KEGG" id="mka:MK0377"/>
<dbReference type="HOGENOM" id="CLU_107897_1_0_2"/>
<dbReference type="InParanoid" id="Q8TYC5"/>
<dbReference type="OrthoDB" id="117530at2157"/>
<dbReference type="Proteomes" id="UP000001826">
    <property type="component" value="Chromosome"/>
</dbReference>
<dbReference type="GO" id="GO:0019843">
    <property type="term" value="F:rRNA binding"/>
    <property type="evidence" value="ECO:0007669"/>
    <property type="project" value="InterPro"/>
</dbReference>
<dbReference type="GO" id="GO:0006364">
    <property type="term" value="P:rRNA processing"/>
    <property type="evidence" value="ECO:0007669"/>
    <property type="project" value="InterPro"/>
</dbReference>
<dbReference type="Gene3D" id="3.40.50.10480">
    <property type="entry name" value="Probable brix-domain ribosomal biogenesis protein"/>
    <property type="match status" value="1"/>
</dbReference>
<dbReference type="HAMAP" id="MF_00699">
    <property type="entry name" value="BriX"/>
    <property type="match status" value="1"/>
</dbReference>
<dbReference type="InterPro" id="IPR007109">
    <property type="entry name" value="Brix"/>
</dbReference>
<dbReference type="InterPro" id="IPR023548">
    <property type="entry name" value="Brix_dom_Rbsml_bgen_prot"/>
</dbReference>
<dbReference type="NCBIfam" id="NF003053">
    <property type="entry name" value="PRK03972.1"/>
    <property type="match status" value="1"/>
</dbReference>
<dbReference type="SMART" id="SM00879">
    <property type="entry name" value="Brix"/>
    <property type="match status" value="1"/>
</dbReference>
<dbReference type="SUPFAM" id="SSF52954">
    <property type="entry name" value="Class II aaRS ABD-related"/>
    <property type="match status" value="1"/>
</dbReference>
<dbReference type="PROSITE" id="PS50833">
    <property type="entry name" value="BRIX"/>
    <property type="match status" value="1"/>
</dbReference>
<accession>Q8TYC5</accession>
<gene>
    <name type="ordered locus">MK0377</name>
</gene>
<name>BRIX_METKA</name>